<reference key="1">
    <citation type="journal article" date="2003" name="Appl. Microbiol. Biotechnol.">
        <title>The Corynebacterium glutamicum genome: features and impacts on biotechnological processes.</title>
        <authorList>
            <person name="Ikeda M."/>
            <person name="Nakagawa S."/>
        </authorList>
    </citation>
    <scope>NUCLEOTIDE SEQUENCE [LARGE SCALE GENOMIC DNA]</scope>
    <source>
        <strain>ATCC 13032 / DSM 20300 / JCM 1318 / BCRC 11384 / CCUG 27702 / LMG 3730 / NBRC 12168 / NCIMB 10025 / NRRL B-2784 / 534</strain>
    </source>
</reference>
<reference key="2">
    <citation type="journal article" date="2003" name="J. Biotechnol.">
        <title>The complete Corynebacterium glutamicum ATCC 13032 genome sequence and its impact on the production of L-aspartate-derived amino acids and vitamins.</title>
        <authorList>
            <person name="Kalinowski J."/>
            <person name="Bathe B."/>
            <person name="Bartels D."/>
            <person name="Bischoff N."/>
            <person name="Bott M."/>
            <person name="Burkovski A."/>
            <person name="Dusch N."/>
            <person name="Eggeling L."/>
            <person name="Eikmanns B.J."/>
            <person name="Gaigalat L."/>
            <person name="Goesmann A."/>
            <person name="Hartmann M."/>
            <person name="Huthmacher K."/>
            <person name="Kraemer R."/>
            <person name="Linke B."/>
            <person name="McHardy A.C."/>
            <person name="Meyer F."/>
            <person name="Moeckel B."/>
            <person name="Pfefferle W."/>
            <person name="Puehler A."/>
            <person name="Rey D.A."/>
            <person name="Rueckert C."/>
            <person name="Rupp O."/>
            <person name="Sahm H."/>
            <person name="Wendisch V.F."/>
            <person name="Wiegraebe I."/>
            <person name="Tauch A."/>
        </authorList>
    </citation>
    <scope>NUCLEOTIDE SEQUENCE [LARGE SCALE GENOMIC DNA]</scope>
    <source>
        <strain>ATCC 13032 / DSM 20300 / JCM 1318 / BCRC 11384 / CCUG 27702 / LMG 3730 / NBRC 12168 / NCIMB 10025 / NRRL B-2784 / 534</strain>
    </source>
</reference>
<keyword id="KW-0378">Hydrolase</keyword>
<keyword id="KW-0460">Magnesium</keyword>
<keyword id="KW-0479">Metal-binding</keyword>
<keyword id="KW-0546">Nucleotide metabolism</keyword>
<keyword id="KW-0547">Nucleotide-binding</keyword>
<keyword id="KW-1185">Reference proteome</keyword>
<gene>
    <name type="ordered locus">Cgl2500</name>
    <name type="ordered locus">cg2751</name>
</gene>
<comment type="function">
    <text evidence="1">Pyrophosphatase that catalyzes the hydrolysis of nucleoside triphosphates to their monophosphate derivatives, with a high preference for the non-canonical purine nucleotides XTP (xanthosine triphosphate), dITP (deoxyinosine triphosphate) and ITP. Seems to function as a house-cleaning enzyme that removes non-canonical purine nucleotides from the nucleotide pool, thus preventing their incorporation into DNA/RNA and avoiding chromosomal lesions.</text>
</comment>
<comment type="catalytic activity">
    <reaction evidence="1">
        <text>XTP + H2O = XMP + diphosphate + H(+)</text>
        <dbReference type="Rhea" id="RHEA:28610"/>
        <dbReference type="ChEBI" id="CHEBI:15377"/>
        <dbReference type="ChEBI" id="CHEBI:15378"/>
        <dbReference type="ChEBI" id="CHEBI:33019"/>
        <dbReference type="ChEBI" id="CHEBI:57464"/>
        <dbReference type="ChEBI" id="CHEBI:61314"/>
        <dbReference type="EC" id="3.6.1.66"/>
    </reaction>
</comment>
<comment type="catalytic activity">
    <reaction evidence="1">
        <text>dITP + H2O = dIMP + diphosphate + H(+)</text>
        <dbReference type="Rhea" id="RHEA:28342"/>
        <dbReference type="ChEBI" id="CHEBI:15377"/>
        <dbReference type="ChEBI" id="CHEBI:15378"/>
        <dbReference type="ChEBI" id="CHEBI:33019"/>
        <dbReference type="ChEBI" id="CHEBI:61194"/>
        <dbReference type="ChEBI" id="CHEBI:61382"/>
        <dbReference type="EC" id="3.6.1.66"/>
    </reaction>
</comment>
<comment type="catalytic activity">
    <reaction evidence="1">
        <text>ITP + H2O = IMP + diphosphate + H(+)</text>
        <dbReference type="Rhea" id="RHEA:29399"/>
        <dbReference type="ChEBI" id="CHEBI:15377"/>
        <dbReference type="ChEBI" id="CHEBI:15378"/>
        <dbReference type="ChEBI" id="CHEBI:33019"/>
        <dbReference type="ChEBI" id="CHEBI:58053"/>
        <dbReference type="ChEBI" id="CHEBI:61402"/>
        <dbReference type="EC" id="3.6.1.66"/>
    </reaction>
</comment>
<comment type="cofactor">
    <cofactor evidence="1">
        <name>Mg(2+)</name>
        <dbReference type="ChEBI" id="CHEBI:18420"/>
    </cofactor>
    <text evidence="1">Binds 1 Mg(2+) ion per subunit.</text>
</comment>
<comment type="subunit">
    <text evidence="1">Homodimer.</text>
</comment>
<comment type="similarity">
    <text evidence="1">Belongs to the HAM1 NTPase family.</text>
</comment>
<protein>
    <recommendedName>
        <fullName evidence="1">dITP/XTP pyrophosphatase</fullName>
        <ecNumber evidence="1">3.6.1.66</ecNumber>
    </recommendedName>
    <alternativeName>
        <fullName evidence="1">Non-canonical purine NTP pyrophosphatase</fullName>
    </alternativeName>
    <alternativeName>
        <fullName evidence="1">Non-standard purine NTP pyrophosphatase</fullName>
    </alternativeName>
    <alternativeName>
        <fullName evidence="1">Nucleoside-triphosphate diphosphatase</fullName>
    </alternativeName>
    <alternativeName>
        <fullName evidence="1">Nucleoside-triphosphate pyrophosphatase</fullName>
        <shortName evidence="1">NTPase</shortName>
    </alternativeName>
</protein>
<sequence>MKLLLASNNAKKLKELQRILDQAGLDSVELLALRDVEAYDEPIEDGRTFADNAQIKARAGVTHTGIATIADDSGIAVEELNGMPGVLSARWSGAHGNDTANNELLLAQMEHVPDERRNAAFVSVCVLALPDGQEFVQEGRWEGQLLRGPKGENGFGYDPLFIPAEEIDGQGRSSAELSAEEKDALSHRGQALRGLVEKIAQVAAAS</sequence>
<feature type="chain" id="PRO_0000178159" description="dITP/XTP pyrophosphatase">
    <location>
        <begin position="1"/>
        <end position="206"/>
    </location>
</feature>
<feature type="active site" description="Proton acceptor" evidence="1">
    <location>
        <position position="72"/>
    </location>
</feature>
<feature type="binding site" evidence="1">
    <location>
        <begin position="7"/>
        <end position="12"/>
    </location>
    <ligand>
        <name>substrate</name>
    </ligand>
</feature>
<feature type="binding site" evidence="1">
    <location>
        <position position="72"/>
    </location>
    <ligand>
        <name>Mg(2+)</name>
        <dbReference type="ChEBI" id="CHEBI:18420"/>
    </ligand>
</feature>
<feature type="binding site" evidence="1">
    <location>
        <position position="73"/>
    </location>
    <ligand>
        <name>substrate</name>
    </ligand>
</feature>
<feature type="binding site" evidence="1">
    <location>
        <begin position="155"/>
        <end position="158"/>
    </location>
    <ligand>
        <name>substrate</name>
    </ligand>
</feature>
<feature type="binding site" evidence="1">
    <location>
        <position position="182"/>
    </location>
    <ligand>
        <name>substrate</name>
    </ligand>
</feature>
<feature type="binding site" evidence="1">
    <location>
        <begin position="187"/>
        <end position="188"/>
    </location>
    <ligand>
        <name>substrate</name>
    </ligand>
</feature>
<dbReference type="EC" id="3.6.1.66" evidence="1"/>
<dbReference type="EMBL" id="BA000036">
    <property type="protein sequence ID" value="BAB99893.1"/>
    <property type="molecule type" value="Genomic_DNA"/>
</dbReference>
<dbReference type="EMBL" id="BX927155">
    <property type="protein sequence ID" value="CAF21163.1"/>
    <property type="molecule type" value="Genomic_DNA"/>
</dbReference>
<dbReference type="RefSeq" id="NP_601702.1">
    <property type="nucleotide sequence ID" value="NC_003450.3"/>
</dbReference>
<dbReference type="SMR" id="Q8NMR5"/>
<dbReference type="STRING" id="196627.cg2751"/>
<dbReference type="KEGG" id="cgb:cg2751"/>
<dbReference type="KEGG" id="cgl:Cgl2500"/>
<dbReference type="PATRIC" id="fig|196627.13.peg.2433"/>
<dbReference type="eggNOG" id="COG0127">
    <property type="taxonomic scope" value="Bacteria"/>
</dbReference>
<dbReference type="HOGENOM" id="CLU_082080_0_1_11"/>
<dbReference type="OrthoDB" id="9807456at2"/>
<dbReference type="BioCyc" id="CORYNE:G18NG-12104-MONOMER"/>
<dbReference type="Proteomes" id="UP000000582">
    <property type="component" value="Chromosome"/>
</dbReference>
<dbReference type="Proteomes" id="UP000001009">
    <property type="component" value="Chromosome"/>
</dbReference>
<dbReference type="GO" id="GO:0005829">
    <property type="term" value="C:cytosol"/>
    <property type="evidence" value="ECO:0007669"/>
    <property type="project" value="TreeGrafter"/>
</dbReference>
<dbReference type="GO" id="GO:0035870">
    <property type="term" value="F:dITP diphosphatase activity"/>
    <property type="evidence" value="ECO:0007669"/>
    <property type="project" value="RHEA"/>
</dbReference>
<dbReference type="GO" id="GO:0036220">
    <property type="term" value="F:ITP diphosphatase activity"/>
    <property type="evidence" value="ECO:0007669"/>
    <property type="project" value="UniProtKB-EC"/>
</dbReference>
<dbReference type="GO" id="GO:0046872">
    <property type="term" value="F:metal ion binding"/>
    <property type="evidence" value="ECO:0007669"/>
    <property type="project" value="UniProtKB-KW"/>
</dbReference>
<dbReference type="GO" id="GO:0000166">
    <property type="term" value="F:nucleotide binding"/>
    <property type="evidence" value="ECO:0007669"/>
    <property type="project" value="UniProtKB-KW"/>
</dbReference>
<dbReference type="GO" id="GO:0017111">
    <property type="term" value="F:ribonucleoside triphosphate phosphatase activity"/>
    <property type="evidence" value="ECO:0007669"/>
    <property type="project" value="InterPro"/>
</dbReference>
<dbReference type="GO" id="GO:0036222">
    <property type="term" value="F:XTP diphosphatase activity"/>
    <property type="evidence" value="ECO:0007669"/>
    <property type="project" value="RHEA"/>
</dbReference>
<dbReference type="GO" id="GO:0009117">
    <property type="term" value="P:nucleotide metabolic process"/>
    <property type="evidence" value="ECO:0007669"/>
    <property type="project" value="UniProtKB-KW"/>
</dbReference>
<dbReference type="GO" id="GO:0009146">
    <property type="term" value="P:purine nucleoside triphosphate catabolic process"/>
    <property type="evidence" value="ECO:0007669"/>
    <property type="project" value="UniProtKB-UniRule"/>
</dbReference>
<dbReference type="CDD" id="cd00515">
    <property type="entry name" value="HAM1"/>
    <property type="match status" value="1"/>
</dbReference>
<dbReference type="FunFam" id="3.90.950.10:FF:000001">
    <property type="entry name" value="dITP/XTP pyrophosphatase"/>
    <property type="match status" value="1"/>
</dbReference>
<dbReference type="Gene3D" id="3.90.950.10">
    <property type="match status" value="1"/>
</dbReference>
<dbReference type="HAMAP" id="MF_01405">
    <property type="entry name" value="Non_canon_purine_NTPase"/>
    <property type="match status" value="1"/>
</dbReference>
<dbReference type="InterPro" id="IPR020922">
    <property type="entry name" value="dITP/XTP_pyrophosphatase"/>
</dbReference>
<dbReference type="InterPro" id="IPR029001">
    <property type="entry name" value="ITPase-like_fam"/>
</dbReference>
<dbReference type="InterPro" id="IPR002637">
    <property type="entry name" value="RdgB/HAM1"/>
</dbReference>
<dbReference type="NCBIfam" id="TIGR00042">
    <property type="entry name" value="RdgB/HAM1 family non-canonical purine NTP pyrophosphatase"/>
    <property type="match status" value="1"/>
</dbReference>
<dbReference type="PANTHER" id="PTHR11067:SF9">
    <property type="entry name" value="INOSINE TRIPHOSPHATE PYROPHOSPHATASE"/>
    <property type="match status" value="1"/>
</dbReference>
<dbReference type="PANTHER" id="PTHR11067">
    <property type="entry name" value="INOSINE TRIPHOSPHATE PYROPHOSPHATASE/HAM1 PROTEIN"/>
    <property type="match status" value="1"/>
</dbReference>
<dbReference type="Pfam" id="PF01725">
    <property type="entry name" value="Ham1p_like"/>
    <property type="match status" value="1"/>
</dbReference>
<dbReference type="SUPFAM" id="SSF52972">
    <property type="entry name" value="ITPase-like"/>
    <property type="match status" value="1"/>
</dbReference>
<accession>Q8NMR5</accession>
<organism>
    <name type="scientific">Corynebacterium glutamicum (strain ATCC 13032 / DSM 20300 / JCM 1318 / BCRC 11384 / CCUG 27702 / LMG 3730 / NBRC 12168 / NCIMB 10025 / NRRL B-2784 / 534)</name>
    <dbReference type="NCBI Taxonomy" id="196627"/>
    <lineage>
        <taxon>Bacteria</taxon>
        <taxon>Bacillati</taxon>
        <taxon>Actinomycetota</taxon>
        <taxon>Actinomycetes</taxon>
        <taxon>Mycobacteriales</taxon>
        <taxon>Corynebacteriaceae</taxon>
        <taxon>Corynebacterium</taxon>
    </lineage>
</organism>
<name>IXTPA_CORGL</name>
<proteinExistence type="inferred from homology"/>
<evidence type="ECO:0000255" key="1">
    <source>
        <dbReference type="HAMAP-Rule" id="MF_01405"/>
    </source>
</evidence>